<keyword id="KW-0963">Cytoplasm</keyword>
<keyword id="KW-0269">Exonuclease</keyword>
<keyword id="KW-0378">Hydrolase</keyword>
<keyword id="KW-0540">Nuclease</keyword>
<keyword id="KW-1185">Reference proteome</keyword>
<gene>
    <name evidence="1" type="primary">xseB</name>
    <name type="ordered locus">Gura_2177</name>
</gene>
<comment type="function">
    <text evidence="1">Bidirectionally degrades single-stranded DNA into large acid-insoluble oligonucleotides, which are then degraded further into small acid-soluble oligonucleotides.</text>
</comment>
<comment type="catalytic activity">
    <reaction evidence="1">
        <text>Exonucleolytic cleavage in either 5'- to 3'- or 3'- to 5'-direction to yield nucleoside 5'-phosphates.</text>
        <dbReference type="EC" id="3.1.11.6"/>
    </reaction>
</comment>
<comment type="subunit">
    <text evidence="1">Heterooligomer composed of large and small subunits.</text>
</comment>
<comment type="subcellular location">
    <subcellularLocation>
        <location evidence="1">Cytoplasm</location>
    </subcellularLocation>
</comment>
<comment type="similarity">
    <text evidence="1">Belongs to the XseB family.</text>
</comment>
<dbReference type="EC" id="3.1.11.6" evidence="1"/>
<dbReference type="EMBL" id="CP000698">
    <property type="protein sequence ID" value="ABQ26364.1"/>
    <property type="molecule type" value="Genomic_DNA"/>
</dbReference>
<dbReference type="RefSeq" id="WP_011939063.1">
    <property type="nucleotide sequence ID" value="NC_009483.1"/>
</dbReference>
<dbReference type="SMR" id="A5G3J6"/>
<dbReference type="STRING" id="351605.Gura_2177"/>
<dbReference type="KEGG" id="gur:Gura_2177"/>
<dbReference type="HOGENOM" id="CLU_145918_3_3_7"/>
<dbReference type="OrthoDB" id="5523157at2"/>
<dbReference type="Proteomes" id="UP000006695">
    <property type="component" value="Chromosome"/>
</dbReference>
<dbReference type="GO" id="GO:0005829">
    <property type="term" value="C:cytosol"/>
    <property type="evidence" value="ECO:0007669"/>
    <property type="project" value="TreeGrafter"/>
</dbReference>
<dbReference type="GO" id="GO:0009318">
    <property type="term" value="C:exodeoxyribonuclease VII complex"/>
    <property type="evidence" value="ECO:0007669"/>
    <property type="project" value="InterPro"/>
</dbReference>
<dbReference type="GO" id="GO:0008855">
    <property type="term" value="F:exodeoxyribonuclease VII activity"/>
    <property type="evidence" value="ECO:0007669"/>
    <property type="project" value="UniProtKB-UniRule"/>
</dbReference>
<dbReference type="GO" id="GO:0006308">
    <property type="term" value="P:DNA catabolic process"/>
    <property type="evidence" value="ECO:0007669"/>
    <property type="project" value="UniProtKB-UniRule"/>
</dbReference>
<dbReference type="Gene3D" id="1.10.287.1040">
    <property type="entry name" value="Exonuclease VII, small subunit"/>
    <property type="match status" value="1"/>
</dbReference>
<dbReference type="HAMAP" id="MF_00337">
    <property type="entry name" value="Exonuc_7_S"/>
    <property type="match status" value="1"/>
</dbReference>
<dbReference type="InterPro" id="IPR003761">
    <property type="entry name" value="Exonuc_VII_S"/>
</dbReference>
<dbReference type="InterPro" id="IPR037004">
    <property type="entry name" value="Exonuc_VII_ssu_sf"/>
</dbReference>
<dbReference type="NCBIfam" id="NF002140">
    <property type="entry name" value="PRK00977.1-4"/>
    <property type="match status" value="1"/>
</dbReference>
<dbReference type="NCBIfam" id="NF010669">
    <property type="entry name" value="PRK14066.1"/>
    <property type="match status" value="1"/>
</dbReference>
<dbReference type="NCBIfam" id="TIGR01280">
    <property type="entry name" value="xseB"/>
    <property type="match status" value="1"/>
</dbReference>
<dbReference type="PANTHER" id="PTHR34137">
    <property type="entry name" value="EXODEOXYRIBONUCLEASE 7 SMALL SUBUNIT"/>
    <property type="match status" value="1"/>
</dbReference>
<dbReference type="PANTHER" id="PTHR34137:SF1">
    <property type="entry name" value="EXODEOXYRIBONUCLEASE 7 SMALL SUBUNIT"/>
    <property type="match status" value="1"/>
</dbReference>
<dbReference type="Pfam" id="PF02609">
    <property type="entry name" value="Exonuc_VII_S"/>
    <property type="match status" value="1"/>
</dbReference>
<dbReference type="PIRSF" id="PIRSF006488">
    <property type="entry name" value="Exonuc_VII_S"/>
    <property type="match status" value="1"/>
</dbReference>
<dbReference type="SUPFAM" id="SSF116842">
    <property type="entry name" value="XseB-like"/>
    <property type="match status" value="1"/>
</dbReference>
<name>EX7S_GEOUR</name>
<protein>
    <recommendedName>
        <fullName evidence="1">Exodeoxyribonuclease 7 small subunit</fullName>
        <ecNumber evidence="1">3.1.11.6</ecNumber>
    </recommendedName>
    <alternativeName>
        <fullName evidence="1">Exodeoxyribonuclease VII small subunit</fullName>
        <shortName evidence="1">Exonuclease VII small subunit</shortName>
    </alternativeName>
</protein>
<sequence>MAVEKFETALKKLEEVVKKLEGGELPLEDSLKAFEEGVKQAAFCSKKLNEAEKRVELLLKQKDGSFAREEFRLDDE</sequence>
<proteinExistence type="inferred from homology"/>
<feature type="chain" id="PRO_1000079285" description="Exodeoxyribonuclease 7 small subunit">
    <location>
        <begin position="1"/>
        <end position="76"/>
    </location>
</feature>
<reference key="1">
    <citation type="submission" date="2007-05" db="EMBL/GenBank/DDBJ databases">
        <title>Complete sequence of Geobacter uraniireducens Rf4.</title>
        <authorList>
            <consortium name="US DOE Joint Genome Institute"/>
            <person name="Copeland A."/>
            <person name="Lucas S."/>
            <person name="Lapidus A."/>
            <person name="Barry K."/>
            <person name="Detter J.C."/>
            <person name="Glavina del Rio T."/>
            <person name="Hammon N."/>
            <person name="Israni S."/>
            <person name="Dalin E."/>
            <person name="Tice H."/>
            <person name="Pitluck S."/>
            <person name="Chertkov O."/>
            <person name="Brettin T."/>
            <person name="Bruce D."/>
            <person name="Han C."/>
            <person name="Schmutz J."/>
            <person name="Larimer F."/>
            <person name="Land M."/>
            <person name="Hauser L."/>
            <person name="Kyrpides N."/>
            <person name="Mikhailova N."/>
            <person name="Shelobolina E."/>
            <person name="Aklujkar M."/>
            <person name="Lovley D."/>
            <person name="Richardson P."/>
        </authorList>
    </citation>
    <scope>NUCLEOTIDE SEQUENCE [LARGE SCALE GENOMIC DNA]</scope>
    <source>
        <strain>ATCC BAA-1134 / JCM 13001 / Rf4</strain>
    </source>
</reference>
<organism>
    <name type="scientific">Geotalea uraniireducens (strain Rf4)</name>
    <name type="common">Geobacter uraniireducens</name>
    <dbReference type="NCBI Taxonomy" id="351605"/>
    <lineage>
        <taxon>Bacteria</taxon>
        <taxon>Pseudomonadati</taxon>
        <taxon>Thermodesulfobacteriota</taxon>
        <taxon>Desulfuromonadia</taxon>
        <taxon>Geobacterales</taxon>
        <taxon>Geobacteraceae</taxon>
        <taxon>Geotalea</taxon>
    </lineage>
</organism>
<evidence type="ECO:0000255" key="1">
    <source>
        <dbReference type="HAMAP-Rule" id="MF_00337"/>
    </source>
</evidence>
<accession>A5G3J6</accession>